<sequence length="130" mass="12929">MRQKAVSLFLCYLLLFTCSGVEAGKKKCSESSDSGSGFWKALTFMAVGGGLAVAGLPALGFTGAGIAANSVAASLMSWSAILNGGGVPAGGLVATLQSLGAGGSSVITGNIGALMGYATHKYLDSEEDEE</sequence>
<gene>
    <name type="primary">IFI6</name>
</gene>
<feature type="chain" id="PRO_0000008742" description="Interferon alpha-inducible protein 6">
    <location>
        <begin position="1"/>
        <end position="130"/>
    </location>
</feature>
<feature type="transmembrane region" description="Helical" evidence="2">
    <location>
        <begin position="4"/>
        <end position="24"/>
    </location>
</feature>
<feature type="transmembrane region" description="Helical" evidence="2">
    <location>
        <begin position="41"/>
        <end position="61"/>
    </location>
</feature>
<feature type="transmembrane region" description="Helical" evidence="2">
    <location>
        <begin position="75"/>
        <end position="95"/>
    </location>
</feature>
<feature type="transmembrane region" description="Helical" evidence="2">
    <location>
        <begin position="99"/>
        <end position="119"/>
    </location>
</feature>
<accession>Q28808</accession>
<proteinExistence type="evidence at transcript level"/>
<name>IFI6_PANTR</name>
<keyword id="KW-0051">Antiviral defense</keyword>
<keyword id="KW-0053">Apoptosis</keyword>
<keyword id="KW-0391">Immunity</keyword>
<keyword id="KW-0399">Innate immunity</keyword>
<keyword id="KW-0472">Membrane</keyword>
<keyword id="KW-0496">Mitochondrion</keyword>
<keyword id="KW-0999">Mitochondrion inner membrane</keyword>
<keyword id="KW-1185">Reference proteome</keyword>
<keyword id="KW-0812">Transmembrane</keyword>
<keyword id="KW-1133">Transmembrane helix</keyword>
<reference key="1">
    <citation type="journal article" date="1992" name="Virology">
        <title>Interferon-inducible gene expression in chimpanzee liver infected with hepatitis C virus.</title>
        <authorList>
            <person name="Kato T."/>
            <person name="Esumi M."/>
            <person name="Yamashita S."/>
            <person name="Abe K."/>
            <person name="Shikata T."/>
        </authorList>
    </citation>
    <scope>NUCLEOTIDE SEQUENCE [MRNA]</scope>
</reference>
<reference key="2">
    <citation type="journal article" date="2004" name="BMC Genomics">
        <title>Identification of a novel gene family that includes the interferon-inducible human genes 6-16 and ISG12.</title>
        <authorList>
            <person name="Parker N."/>
            <person name="Porter A.C.G."/>
        </authorList>
    </citation>
    <scope>IDENTIFICATION</scope>
</reference>
<evidence type="ECO:0000250" key="1">
    <source>
        <dbReference type="UniProtKB" id="P09912"/>
    </source>
</evidence>
<evidence type="ECO:0000255" key="2"/>
<evidence type="ECO:0000303" key="3">
    <source>
    </source>
</evidence>
<evidence type="ECO:0000305" key="4"/>
<comment type="function">
    <text evidence="1">Interferon-stimulated protein that plays an important role in innate immune response against a wide variety of viruses. Inhibits flavivirus replication by preventing the formation of virus-induced endoplasmic reticulum membrane invaginations, which are double-membrane vesicles that flaviviruses use for their replication. Plays a role in apoptosis, negatively regulating the intrinsinc apoptotic signaling pathway and TNFSF10-induced apoptosis. However, it has also been shown to have a pro-apoptotic activity. Modulates innate immune response mediated by RIGI by preventing its activation.</text>
</comment>
<comment type="subunit">
    <text evidence="1">Interacts with CIB1; the interaction is direct. Interacts with the chaperone BIP/HSPA5. Interacts with RIGI.</text>
</comment>
<comment type="subcellular location">
    <subcellularLocation>
        <location evidence="1">Mitochondrion inner membrane</location>
        <topology evidence="2">Multi-pass membrane protein</topology>
    </subcellularLocation>
</comment>
<comment type="PTM">
    <text evidence="1">Glycosylated.</text>
</comment>
<comment type="similarity">
    <text evidence="4">Belongs to the IFI6/IFI27 family.</text>
</comment>
<protein>
    <recommendedName>
        <fullName evidence="4">Interferon alpha-inducible protein 6</fullName>
    </recommendedName>
    <alternativeName>
        <fullName evidence="3">Interferon-induced protein 6-16</fullName>
        <shortName evidence="3">Ifi-6-16</shortName>
    </alternativeName>
</protein>
<organism>
    <name type="scientific">Pan troglodytes</name>
    <name type="common">Chimpanzee</name>
    <dbReference type="NCBI Taxonomy" id="9598"/>
    <lineage>
        <taxon>Eukaryota</taxon>
        <taxon>Metazoa</taxon>
        <taxon>Chordata</taxon>
        <taxon>Craniata</taxon>
        <taxon>Vertebrata</taxon>
        <taxon>Euteleostomi</taxon>
        <taxon>Mammalia</taxon>
        <taxon>Eutheria</taxon>
        <taxon>Euarchontoglires</taxon>
        <taxon>Primates</taxon>
        <taxon>Haplorrhini</taxon>
        <taxon>Catarrhini</taxon>
        <taxon>Hominidae</taxon>
        <taxon>Pan</taxon>
    </lineage>
</organism>
<dbReference type="EMBL" id="D11384">
    <property type="protein sequence ID" value="BAA01980.1"/>
    <property type="molecule type" value="mRNA"/>
</dbReference>
<dbReference type="EMBL" id="BN000256">
    <property type="protein sequence ID" value="CAE12274.1"/>
    <property type="molecule type" value="mRNA"/>
</dbReference>
<dbReference type="RefSeq" id="NP_001009069.1">
    <property type="nucleotide sequence ID" value="NM_001009069.1"/>
</dbReference>
<dbReference type="RefSeq" id="XP_016812747.1">
    <property type="nucleotide sequence ID" value="XM_016957258.1"/>
</dbReference>
<dbReference type="FunCoup" id="Q28808">
    <property type="interactions" value="51"/>
</dbReference>
<dbReference type="STRING" id="9598.ENSPTRP00000000720"/>
<dbReference type="PaxDb" id="9598-ENSPTRP00000000720"/>
<dbReference type="GeneID" id="450178"/>
<dbReference type="KEGG" id="ptr:450178"/>
<dbReference type="CTD" id="2537"/>
<dbReference type="eggNOG" id="ENOG502SCCP">
    <property type="taxonomic scope" value="Eukaryota"/>
</dbReference>
<dbReference type="HOGENOM" id="CLU_119109_0_0_1"/>
<dbReference type="InParanoid" id="Q28808"/>
<dbReference type="TreeFam" id="TF340510"/>
<dbReference type="Proteomes" id="UP000002277">
    <property type="component" value="Unplaced"/>
</dbReference>
<dbReference type="GO" id="GO:0005743">
    <property type="term" value="C:mitochondrial inner membrane"/>
    <property type="evidence" value="ECO:0000250"/>
    <property type="project" value="UniProtKB"/>
</dbReference>
<dbReference type="GO" id="GO:0031966">
    <property type="term" value="C:mitochondrial membrane"/>
    <property type="evidence" value="ECO:0000318"/>
    <property type="project" value="GO_Central"/>
</dbReference>
<dbReference type="GO" id="GO:0005739">
    <property type="term" value="C:mitochondrion"/>
    <property type="evidence" value="ECO:0000250"/>
    <property type="project" value="HGNC-UCL"/>
</dbReference>
<dbReference type="GO" id="GO:0060090">
    <property type="term" value="F:molecular adaptor activity"/>
    <property type="evidence" value="ECO:0000318"/>
    <property type="project" value="GO_Central"/>
</dbReference>
<dbReference type="GO" id="GO:0006915">
    <property type="term" value="P:apoptotic process"/>
    <property type="evidence" value="ECO:0000250"/>
    <property type="project" value="UniProtKB"/>
</dbReference>
<dbReference type="GO" id="GO:0098586">
    <property type="term" value="P:cellular response to virus"/>
    <property type="evidence" value="ECO:0000250"/>
    <property type="project" value="UniProtKB"/>
</dbReference>
<dbReference type="GO" id="GO:0051607">
    <property type="term" value="P:defense response to virus"/>
    <property type="evidence" value="ECO:0000250"/>
    <property type="project" value="UniProtKB"/>
</dbReference>
<dbReference type="GO" id="GO:0045087">
    <property type="term" value="P:innate immune response"/>
    <property type="evidence" value="ECO:0000250"/>
    <property type="project" value="UniProtKB"/>
</dbReference>
<dbReference type="GO" id="GO:0097193">
    <property type="term" value="P:intrinsic apoptotic signaling pathway"/>
    <property type="evidence" value="ECO:0000250"/>
    <property type="project" value="UniProtKB"/>
</dbReference>
<dbReference type="GO" id="GO:0043066">
    <property type="term" value="P:negative regulation of apoptotic process"/>
    <property type="evidence" value="ECO:0000250"/>
    <property type="project" value="UniProtKB"/>
</dbReference>
<dbReference type="GO" id="GO:2001240">
    <property type="term" value="P:negative regulation of extrinsic apoptotic signaling pathway in absence of ligand"/>
    <property type="evidence" value="ECO:0000250"/>
    <property type="project" value="HGNC"/>
</dbReference>
<dbReference type="GO" id="GO:0051902">
    <property type="term" value="P:negative regulation of mitochondrial depolarization"/>
    <property type="evidence" value="ECO:0000250"/>
    <property type="project" value="HGNC-UCL"/>
</dbReference>
<dbReference type="GO" id="GO:0090201">
    <property type="term" value="P:negative regulation of release of cytochrome c from mitochondria"/>
    <property type="evidence" value="ECO:0000250"/>
    <property type="project" value="HGNC-UCL"/>
</dbReference>
<dbReference type="GO" id="GO:0072593">
    <property type="term" value="P:reactive oxygen species metabolic process"/>
    <property type="evidence" value="ECO:0000250"/>
    <property type="project" value="UniProtKB"/>
</dbReference>
<dbReference type="GO" id="GO:0042058">
    <property type="term" value="P:regulation of epidermal growth factor receptor signaling pathway"/>
    <property type="evidence" value="ECO:0000250"/>
    <property type="project" value="UniProtKB"/>
</dbReference>
<dbReference type="Gene3D" id="6.10.110.10">
    <property type="match status" value="1"/>
</dbReference>
<dbReference type="InterPro" id="IPR009311">
    <property type="entry name" value="IFI6/IFI27-like"/>
</dbReference>
<dbReference type="InterPro" id="IPR038213">
    <property type="entry name" value="IFI6/IFI27-like_sf"/>
</dbReference>
<dbReference type="PANTHER" id="PTHR16932">
    <property type="entry name" value="INTERFERON ALPHA-INDUCIBLE PROTEIN 27"/>
    <property type="match status" value="1"/>
</dbReference>
<dbReference type="PANTHER" id="PTHR16932:SF25">
    <property type="entry name" value="INTERFERON ALPHA-INDUCIBLE PROTEIN 6"/>
    <property type="match status" value="1"/>
</dbReference>
<dbReference type="Pfam" id="PF06140">
    <property type="entry name" value="Ifi-6-16"/>
    <property type="match status" value="1"/>
</dbReference>